<proteinExistence type="evidence at transcript level"/>
<organism>
    <name type="scientific">Mus musculus</name>
    <name type="common">Mouse</name>
    <dbReference type="NCBI Taxonomy" id="10090"/>
    <lineage>
        <taxon>Eukaryota</taxon>
        <taxon>Metazoa</taxon>
        <taxon>Chordata</taxon>
        <taxon>Craniata</taxon>
        <taxon>Vertebrata</taxon>
        <taxon>Euteleostomi</taxon>
        <taxon>Mammalia</taxon>
        <taxon>Eutheria</taxon>
        <taxon>Euarchontoglires</taxon>
        <taxon>Glires</taxon>
        <taxon>Rodentia</taxon>
        <taxon>Myomorpha</taxon>
        <taxon>Muroidea</taxon>
        <taxon>Muridae</taxon>
        <taxon>Murinae</taxon>
        <taxon>Mus</taxon>
        <taxon>Mus</taxon>
    </lineage>
</organism>
<reference key="1">
    <citation type="journal article" date="2005" name="Science">
        <title>The transcriptional landscape of the mammalian genome.</title>
        <authorList>
            <person name="Carninci P."/>
            <person name="Kasukawa T."/>
            <person name="Katayama S."/>
            <person name="Gough J."/>
            <person name="Frith M.C."/>
            <person name="Maeda N."/>
            <person name="Oyama R."/>
            <person name="Ravasi T."/>
            <person name="Lenhard B."/>
            <person name="Wells C."/>
            <person name="Kodzius R."/>
            <person name="Shimokawa K."/>
            <person name="Bajic V.B."/>
            <person name="Brenner S.E."/>
            <person name="Batalov S."/>
            <person name="Forrest A.R."/>
            <person name="Zavolan M."/>
            <person name="Davis M.J."/>
            <person name="Wilming L.G."/>
            <person name="Aidinis V."/>
            <person name="Allen J.E."/>
            <person name="Ambesi-Impiombato A."/>
            <person name="Apweiler R."/>
            <person name="Aturaliya R.N."/>
            <person name="Bailey T.L."/>
            <person name="Bansal M."/>
            <person name="Baxter L."/>
            <person name="Beisel K.W."/>
            <person name="Bersano T."/>
            <person name="Bono H."/>
            <person name="Chalk A.M."/>
            <person name="Chiu K.P."/>
            <person name="Choudhary V."/>
            <person name="Christoffels A."/>
            <person name="Clutterbuck D.R."/>
            <person name="Crowe M.L."/>
            <person name="Dalla E."/>
            <person name="Dalrymple B.P."/>
            <person name="de Bono B."/>
            <person name="Della Gatta G."/>
            <person name="di Bernardo D."/>
            <person name="Down T."/>
            <person name="Engstrom P."/>
            <person name="Fagiolini M."/>
            <person name="Faulkner G."/>
            <person name="Fletcher C.F."/>
            <person name="Fukushima T."/>
            <person name="Furuno M."/>
            <person name="Futaki S."/>
            <person name="Gariboldi M."/>
            <person name="Georgii-Hemming P."/>
            <person name="Gingeras T.R."/>
            <person name="Gojobori T."/>
            <person name="Green R.E."/>
            <person name="Gustincich S."/>
            <person name="Harbers M."/>
            <person name="Hayashi Y."/>
            <person name="Hensch T.K."/>
            <person name="Hirokawa N."/>
            <person name="Hill D."/>
            <person name="Huminiecki L."/>
            <person name="Iacono M."/>
            <person name="Ikeo K."/>
            <person name="Iwama A."/>
            <person name="Ishikawa T."/>
            <person name="Jakt M."/>
            <person name="Kanapin A."/>
            <person name="Katoh M."/>
            <person name="Kawasawa Y."/>
            <person name="Kelso J."/>
            <person name="Kitamura H."/>
            <person name="Kitano H."/>
            <person name="Kollias G."/>
            <person name="Krishnan S.P."/>
            <person name="Kruger A."/>
            <person name="Kummerfeld S.K."/>
            <person name="Kurochkin I.V."/>
            <person name="Lareau L.F."/>
            <person name="Lazarevic D."/>
            <person name="Lipovich L."/>
            <person name="Liu J."/>
            <person name="Liuni S."/>
            <person name="McWilliam S."/>
            <person name="Madan Babu M."/>
            <person name="Madera M."/>
            <person name="Marchionni L."/>
            <person name="Matsuda H."/>
            <person name="Matsuzawa S."/>
            <person name="Miki H."/>
            <person name="Mignone F."/>
            <person name="Miyake S."/>
            <person name="Morris K."/>
            <person name="Mottagui-Tabar S."/>
            <person name="Mulder N."/>
            <person name="Nakano N."/>
            <person name="Nakauchi H."/>
            <person name="Ng P."/>
            <person name="Nilsson R."/>
            <person name="Nishiguchi S."/>
            <person name="Nishikawa S."/>
            <person name="Nori F."/>
            <person name="Ohara O."/>
            <person name="Okazaki Y."/>
            <person name="Orlando V."/>
            <person name="Pang K.C."/>
            <person name="Pavan W.J."/>
            <person name="Pavesi G."/>
            <person name="Pesole G."/>
            <person name="Petrovsky N."/>
            <person name="Piazza S."/>
            <person name="Reed J."/>
            <person name="Reid J.F."/>
            <person name="Ring B.Z."/>
            <person name="Ringwald M."/>
            <person name="Rost B."/>
            <person name="Ruan Y."/>
            <person name="Salzberg S.L."/>
            <person name="Sandelin A."/>
            <person name="Schneider C."/>
            <person name="Schoenbach C."/>
            <person name="Sekiguchi K."/>
            <person name="Semple C.A."/>
            <person name="Seno S."/>
            <person name="Sessa L."/>
            <person name="Sheng Y."/>
            <person name="Shibata Y."/>
            <person name="Shimada H."/>
            <person name="Shimada K."/>
            <person name="Silva D."/>
            <person name="Sinclair B."/>
            <person name="Sperling S."/>
            <person name="Stupka E."/>
            <person name="Sugiura K."/>
            <person name="Sultana R."/>
            <person name="Takenaka Y."/>
            <person name="Taki K."/>
            <person name="Tammoja K."/>
            <person name="Tan S.L."/>
            <person name="Tang S."/>
            <person name="Taylor M.S."/>
            <person name="Tegner J."/>
            <person name="Teichmann S.A."/>
            <person name="Ueda H.R."/>
            <person name="van Nimwegen E."/>
            <person name="Verardo R."/>
            <person name="Wei C.L."/>
            <person name="Yagi K."/>
            <person name="Yamanishi H."/>
            <person name="Zabarovsky E."/>
            <person name="Zhu S."/>
            <person name="Zimmer A."/>
            <person name="Hide W."/>
            <person name="Bult C."/>
            <person name="Grimmond S.M."/>
            <person name="Teasdale R.D."/>
            <person name="Liu E.T."/>
            <person name="Brusic V."/>
            <person name="Quackenbush J."/>
            <person name="Wahlestedt C."/>
            <person name="Mattick J.S."/>
            <person name="Hume D.A."/>
            <person name="Kai C."/>
            <person name="Sasaki D."/>
            <person name="Tomaru Y."/>
            <person name="Fukuda S."/>
            <person name="Kanamori-Katayama M."/>
            <person name="Suzuki M."/>
            <person name="Aoki J."/>
            <person name="Arakawa T."/>
            <person name="Iida J."/>
            <person name="Imamura K."/>
            <person name="Itoh M."/>
            <person name="Kato T."/>
            <person name="Kawaji H."/>
            <person name="Kawagashira N."/>
            <person name="Kawashima T."/>
            <person name="Kojima M."/>
            <person name="Kondo S."/>
            <person name="Konno H."/>
            <person name="Nakano K."/>
            <person name="Ninomiya N."/>
            <person name="Nishio T."/>
            <person name="Okada M."/>
            <person name="Plessy C."/>
            <person name="Shibata K."/>
            <person name="Shiraki T."/>
            <person name="Suzuki S."/>
            <person name="Tagami M."/>
            <person name="Waki K."/>
            <person name="Watahiki A."/>
            <person name="Okamura-Oho Y."/>
            <person name="Suzuki H."/>
            <person name="Kawai J."/>
            <person name="Hayashizaki Y."/>
        </authorList>
    </citation>
    <scope>NUCLEOTIDE SEQUENCE [LARGE SCALE MRNA]</scope>
    <source>
        <strain>C57BL/6J</strain>
        <strain>NOD</strain>
        <tissue>Dendritic cell</tissue>
        <tissue>Inner ear</tissue>
    </source>
</reference>
<reference key="2">
    <citation type="journal article" date="2009" name="PLoS Biol.">
        <title>Lineage-specific biology revealed by a finished genome assembly of the mouse.</title>
        <authorList>
            <person name="Church D.M."/>
            <person name="Goodstadt L."/>
            <person name="Hillier L.W."/>
            <person name="Zody M.C."/>
            <person name="Goldstein S."/>
            <person name="She X."/>
            <person name="Bult C.J."/>
            <person name="Agarwala R."/>
            <person name="Cherry J.L."/>
            <person name="DiCuccio M."/>
            <person name="Hlavina W."/>
            <person name="Kapustin Y."/>
            <person name="Meric P."/>
            <person name="Maglott D."/>
            <person name="Birtle Z."/>
            <person name="Marques A.C."/>
            <person name="Graves T."/>
            <person name="Zhou S."/>
            <person name="Teague B."/>
            <person name="Potamousis K."/>
            <person name="Churas C."/>
            <person name="Place M."/>
            <person name="Herschleb J."/>
            <person name="Runnheim R."/>
            <person name="Forrest D."/>
            <person name="Amos-Landgraf J."/>
            <person name="Schwartz D.C."/>
            <person name="Cheng Z."/>
            <person name="Lindblad-Toh K."/>
            <person name="Eichler E.E."/>
            <person name="Ponting C.P."/>
        </authorList>
    </citation>
    <scope>NUCLEOTIDE SEQUENCE [LARGE SCALE GENOMIC DNA]</scope>
    <source>
        <strain>C57BL/6J</strain>
    </source>
</reference>
<reference key="3">
    <citation type="submission" date="2005-07" db="EMBL/GenBank/DDBJ databases">
        <authorList>
            <person name="Mural R.J."/>
            <person name="Adams M.D."/>
            <person name="Myers E.W."/>
            <person name="Smith H.O."/>
            <person name="Venter J.C."/>
        </authorList>
    </citation>
    <scope>NUCLEOTIDE SEQUENCE [LARGE SCALE GENOMIC DNA]</scope>
</reference>
<reference key="4">
    <citation type="journal article" date="2004" name="Genome Res.">
        <title>The status, quality, and expansion of the NIH full-length cDNA project: the Mammalian Gene Collection (MGC).</title>
        <authorList>
            <consortium name="The MGC Project Team"/>
        </authorList>
    </citation>
    <scope>NUCLEOTIDE SEQUENCE [LARGE SCALE MRNA]</scope>
    <source>
        <tissue>Brain</tissue>
    </source>
</reference>
<protein>
    <recommendedName>
        <fullName>Kelch-like protein 21</fullName>
    </recommendedName>
</protein>
<gene>
    <name type="primary">Klhl21</name>
</gene>
<keyword id="KW-0131">Cell cycle</keyword>
<keyword id="KW-0132">Cell division</keyword>
<keyword id="KW-0963">Cytoplasm</keyword>
<keyword id="KW-0206">Cytoskeleton</keyword>
<keyword id="KW-0880">Kelch repeat</keyword>
<keyword id="KW-0498">Mitosis</keyword>
<keyword id="KW-1185">Reference proteome</keyword>
<keyword id="KW-0677">Repeat</keyword>
<keyword id="KW-0833">Ubl conjugation pathway</keyword>
<comment type="function">
    <text evidence="1">Substrate-specific adapter of a BCR (BTB-CUL3-RBX1) E3 ubiquitin-protein ligase complex required for efficient chromosome alignment and cytokinesis. The BCR(KLHL21) E3 ubiquitin ligase complex regulates localization of the chromosomal passenger complex (CPC) from chromosomes to the spindle midzone in anaphase and mediates the ubiquitination of AURKB. Ubiquitination of AURKB by BCR(KLHL21) E3 ubiquitin ligase complex may not lead to its degradation by the proteasome (By similarity).</text>
</comment>
<comment type="pathway">
    <text>Protein modification; protein ubiquitination.</text>
</comment>
<comment type="subunit">
    <text evidence="1">Component of the BCR(KLHL21) E3 ubiquitin ligase complex, at least composed of CUL3, KLHL21 and RBX1.</text>
</comment>
<comment type="subcellular location">
    <subcellularLocation>
        <location evidence="1">Cytoplasm</location>
        <location evidence="1">Cytoskeleton</location>
        <location evidence="1">Spindle</location>
    </subcellularLocation>
    <text evidence="1">Localizes to the spindle midzone and targets CUL3 to this region.</text>
</comment>
<comment type="sequence caution" evidence="4">
    <conflict type="erroneous initiation">
        <sequence resource="EMBL-CDS" id="BAE34380"/>
    </conflict>
</comment>
<evidence type="ECO:0000250" key="1"/>
<evidence type="ECO:0000255" key="2">
    <source>
        <dbReference type="PROSITE-ProRule" id="PRU00037"/>
    </source>
</evidence>
<evidence type="ECO:0000256" key="3">
    <source>
        <dbReference type="SAM" id="MobiDB-lite"/>
    </source>
</evidence>
<evidence type="ECO:0000305" key="4"/>
<feature type="chain" id="PRO_0000326128" description="Kelch-like protein 21">
    <location>
        <begin position="1"/>
        <end position="597"/>
    </location>
</feature>
<feature type="domain" description="BTB" evidence="2">
    <location>
        <begin position="35"/>
        <end position="103"/>
    </location>
</feature>
<feature type="domain" description="BACK">
    <location>
        <begin position="138"/>
        <end position="239"/>
    </location>
</feature>
<feature type="repeat" description="Kelch 1">
    <location>
        <begin position="287"/>
        <end position="335"/>
    </location>
</feature>
<feature type="repeat" description="Kelch 2">
    <location>
        <begin position="336"/>
        <end position="382"/>
    </location>
</feature>
<feature type="repeat" description="Kelch 3">
    <location>
        <begin position="384"/>
        <end position="422"/>
    </location>
</feature>
<feature type="repeat" description="Kelch 4">
    <location>
        <begin position="423"/>
        <end position="470"/>
    </location>
</feature>
<feature type="repeat" description="Kelch 5">
    <location>
        <begin position="472"/>
        <end position="512"/>
    </location>
</feature>
<feature type="repeat" description="Kelch 6">
    <location>
        <begin position="513"/>
        <end position="560"/>
    </location>
</feature>
<feature type="region of interest" description="Disordered" evidence="3">
    <location>
        <begin position="570"/>
        <end position="597"/>
    </location>
</feature>
<feature type="sequence conflict" description="In Ref. 1; BAE34380." evidence="4" ref="1">
    <original>G</original>
    <variation>S</variation>
    <location>
        <position position="382"/>
    </location>
</feature>
<feature type="sequence conflict" description="In Ref. 1; BAE34380." evidence="4" ref="1">
    <original>I</original>
    <variation>V</variation>
    <location>
        <position position="438"/>
    </location>
</feature>
<name>KLH21_MOUSE</name>
<dbReference type="EMBL" id="AK154493">
    <property type="protein sequence ID" value="BAE32625.1"/>
    <property type="molecule type" value="mRNA"/>
</dbReference>
<dbReference type="EMBL" id="AK158141">
    <property type="protein sequence ID" value="BAE34380.1"/>
    <property type="status" value="ALT_INIT"/>
    <property type="molecule type" value="mRNA"/>
</dbReference>
<dbReference type="EMBL" id="AL611927">
    <property type="status" value="NOT_ANNOTATED_CDS"/>
    <property type="molecule type" value="Genomic_DNA"/>
</dbReference>
<dbReference type="EMBL" id="CH466594">
    <property type="protein sequence ID" value="EDL14916.1"/>
    <property type="molecule type" value="Genomic_DNA"/>
</dbReference>
<dbReference type="EMBL" id="BC141158">
    <property type="protein sequence ID" value="AAI41159.1"/>
    <property type="molecule type" value="mRNA"/>
</dbReference>
<dbReference type="EMBL" id="BC141159">
    <property type="protein sequence ID" value="AAI41160.1"/>
    <property type="molecule type" value="mRNA"/>
</dbReference>
<dbReference type="CCDS" id="CCDS18983.1"/>
<dbReference type="RefSeq" id="NP_001028524.1">
    <property type="nucleotide sequence ID" value="NM_001033352.3"/>
</dbReference>
<dbReference type="SMR" id="Q3U410"/>
<dbReference type="BioGRID" id="232459">
    <property type="interactions" value="16"/>
</dbReference>
<dbReference type="FunCoup" id="Q3U410">
    <property type="interactions" value="4"/>
</dbReference>
<dbReference type="IntAct" id="Q3U410">
    <property type="interactions" value="16"/>
</dbReference>
<dbReference type="STRING" id="10090.ENSMUSP00000095380"/>
<dbReference type="PhosphoSitePlus" id="Q3U410"/>
<dbReference type="PaxDb" id="10090-ENSMUSP00000095380"/>
<dbReference type="ProteomicsDB" id="263622"/>
<dbReference type="Antibodypedia" id="46561">
    <property type="antibodies" value="95 antibodies from 25 providers"/>
</dbReference>
<dbReference type="Ensembl" id="ENSMUST00000097773.4">
    <property type="protein sequence ID" value="ENSMUSP00000095380.4"/>
    <property type="gene ID" value="ENSMUSG00000073700.4"/>
</dbReference>
<dbReference type="GeneID" id="242785"/>
<dbReference type="KEGG" id="mmu:242785"/>
<dbReference type="UCSC" id="uc008vyy.1">
    <property type="organism name" value="mouse"/>
</dbReference>
<dbReference type="AGR" id="MGI:1919288"/>
<dbReference type="CTD" id="9903"/>
<dbReference type="MGI" id="MGI:1919288">
    <property type="gene designation" value="Klhl21"/>
</dbReference>
<dbReference type="VEuPathDB" id="HostDB:ENSMUSG00000073700"/>
<dbReference type="eggNOG" id="KOG4441">
    <property type="taxonomic scope" value="Eukaryota"/>
</dbReference>
<dbReference type="GeneTree" id="ENSGT00940000158631"/>
<dbReference type="HOGENOM" id="CLU_004253_14_6_1"/>
<dbReference type="InParanoid" id="Q3U410"/>
<dbReference type="OMA" id="TWSVVGQ"/>
<dbReference type="OrthoDB" id="45365at2759"/>
<dbReference type="PhylomeDB" id="Q3U410"/>
<dbReference type="TreeFam" id="TF329218"/>
<dbReference type="Reactome" id="R-MMU-8951664">
    <property type="pathway name" value="Neddylation"/>
</dbReference>
<dbReference type="Reactome" id="R-MMU-983168">
    <property type="pathway name" value="Antigen processing: Ubiquitination &amp; Proteasome degradation"/>
</dbReference>
<dbReference type="UniPathway" id="UPA00143"/>
<dbReference type="BioGRID-ORCS" id="242785">
    <property type="hits" value="0 hits in 76 CRISPR screens"/>
</dbReference>
<dbReference type="ChiTaRS" id="Klhl21">
    <property type="organism name" value="mouse"/>
</dbReference>
<dbReference type="PRO" id="PR:Q3U410"/>
<dbReference type="Proteomes" id="UP000000589">
    <property type="component" value="Chromosome 4"/>
</dbReference>
<dbReference type="RNAct" id="Q3U410">
    <property type="molecule type" value="protein"/>
</dbReference>
<dbReference type="Bgee" id="ENSMUSG00000073700">
    <property type="expression patterns" value="Expressed in hindlimb stylopod muscle and 240 other cell types or tissues"/>
</dbReference>
<dbReference type="GO" id="GO:0031463">
    <property type="term" value="C:Cul3-RING ubiquitin ligase complex"/>
    <property type="evidence" value="ECO:0000250"/>
    <property type="project" value="UniProtKB"/>
</dbReference>
<dbReference type="GO" id="GO:0005737">
    <property type="term" value="C:cytoplasm"/>
    <property type="evidence" value="ECO:0007669"/>
    <property type="project" value="UniProtKB-KW"/>
</dbReference>
<dbReference type="GO" id="GO:0005827">
    <property type="term" value="C:polar microtubule"/>
    <property type="evidence" value="ECO:0000250"/>
    <property type="project" value="UniProtKB"/>
</dbReference>
<dbReference type="GO" id="GO:0097602">
    <property type="term" value="F:cullin family protein binding"/>
    <property type="evidence" value="ECO:0007669"/>
    <property type="project" value="Ensembl"/>
</dbReference>
<dbReference type="GO" id="GO:0004842">
    <property type="term" value="F:ubiquitin-protein transferase activity"/>
    <property type="evidence" value="ECO:0007669"/>
    <property type="project" value="Ensembl"/>
</dbReference>
<dbReference type="GO" id="GO:0051301">
    <property type="term" value="P:cell division"/>
    <property type="evidence" value="ECO:0007669"/>
    <property type="project" value="UniProtKB-KW"/>
</dbReference>
<dbReference type="GO" id="GO:0035853">
    <property type="term" value="P:chromosome passenger complex localization to spindle midzone"/>
    <property type="evidence" value="ECO:0000250"/>
    <property type="project" value="UniProtKB"/>
</dbReference>
<dbReference type="GO" id="GO:0016567">
    <property type="term" value="P:protein ubiquitination"/>
    <property type="evidence" value="ECO:0000250"/>
    <property type="project" value="UniProtKB"/>
</dbReference>
<dbReference type="GO" id="GO:0032465">
    <property type="term" value="P:regulation of cytokinesis"/>
    <property type="evidence" value="ECO:0000250"/>
    <property type="project" value="UniProtKB"/>
</dbReference>
<dbReference type="CDD" id="cd18460">
    <property type="entry name" value="BACK_KLHL21"/>
    <property type="match status" value="1"/>
</dbReference>
<dbReference type="CDD" id="cd18250">
    <property type="entry name" value="BTB_POZ_KLHL21"/>
    <property type="match status" value="1"/>
</dbReference>
<dbReference type="FunFam" id="1.25.40.420:FF:000001">
    <property type="entry name" value="Kelch-like family member 12"/>
    <property type="match status" value="1"/>
</dbReference>
<dbReference type="FunFam" id="3.30.710.10:FF:000001">
    <property type="entry name" value="Kelch-like family member 20"/>
    <property type="match status" value="1"/>
</dbReference>
<dbReference type="FunFam" id="2.120.10.80:FF:000044">
    <property type="entry name" value="Kelch-like family member 21"/>
    <property type="match status" value="1"/>
</dbReference>
<dbReference type="Gene3D" id="1.25.40.420">
    <property type="match status" value="1"/>
</dbReference>
<dbReference type="Gene3D" id="2.120.10.80">
    <property type="entry name" value="Kelch-type beta propeller"/>
    <property type="match status" value="1"/>
</dbReference>
<dbReference type="Gene3D" id="3.30.710.10">
    <property type="entry name" value="Potassium Channel Kv1.1, Chain A"/>
    <property type="match status" value="1"/>
</dbReference>
<dbReference type="InterPro" id="IPR011705">
    <property type="entry name" value="BACK"/>
</dbReference>
<dbReference type="InterPro" id="IPR017096">
    <property type="entry name" value="BTB-kelch_protein"/>
</dbReference>
<dbReference type="InterPro" id="IPR000210">
    <property type="entry name" value="BTB/POZ_dom"/>
</dbReference>
<dbReference type="InterPro" id="IPR030577">
    <property type="entry name" value="BTB/POZ_KLHL21"/>
</dbReference>
<dbReference type="InterPro" id="IPR015915">
    <property type="entry name" value="Kelch-typ_b-propeller"/>
</dbReference>
<dbReference type="InterPro" id="IPR006652">
    <property type="entry name" value="Kelch_1"/>
</dbReference>
<dbReference type="InterPro" id="IPR047069">
    <property type="entry name" value="KLHL21_BACK"/>
</dbReference>
<dbReference type="InterPro" id="IPR011333">
    <property type="entry name" value="SKP1/BTB/POZ_sf"/>
</dbReference>
<dbReference type="PANTHER" id="PTHR24412">
    <property type="entry name" value="KELCH PROTEIN"/>
    <property type="match status" value="1"/>
</dbReference>
<dbReference type="PANTHER" id="PTHR24412:SF255">
    <property type="entry name" value="KELCH-LIKE PROTEIN 21"/>
    <property type="match status" value="1"/>
</dbReference>
<dbReference type="Pfam" id="PF07707">
    <property type="entry name" value="BACK"/>
    <property type="match status" value="1"/>
</dbReference>
<dbReference type="Pfam" id="PF00651">
    <property type="entry name" value="BTB"/>
    <property type="match status" value="1"/>
</dbReference>
<dbReference type="Pfam" id="PF01344">
    <property type="entry name" value="Kelch_1"/>
    <property type="match status" value="2"/>
</dbReference>
<dbReference type="Pfam" id="PF13964">
    <property type="entry name" value="Kelch_6"/>
    <property type="match status" value="1"/>
</dbReference>
<dbReference type="PIRSF" id="PIRSF037037">
    <property type="entry name" value="Kelch-like_protein_gigaxonin"/>
    <property type="match status" value="1"/>
</dbReference>
<dbReference type="SMART" id="SM00875">
    <property type="entry name" value="BACK"/>
    <property type="match status" value="1"/>
</dbReference>
<dbReference type="SMART" id="SM00225">
    <property type="entry name" value="BTB"/>
    <property type="match status" value="1"/>
</dbReference>
<dbReference type="SMART" id="SM00612">
    <property type="entry name" value="Kelch"/>
    <property type="match status" value="5"/>
</dbReference>
<dbReference type="SUPFAM" id="SSF117281">
    <property type="entry name" value="Kelch motif"/>
    <property type="match status" value="1"/>
</dbReference>
<dbReference type="SUPFAM" id="SSF54695">
    <property type="entry name" value="POZ domain"/>
    <property type="match status" value="1"/>
</dbReference>
<dbReference type="PROSITE" id="PS50097">
    <property type="entry name" value="BTB"/>
    <property type="match status" value="1"/>
</dbReference>
<sequence>MERPAPLAVLPFSDPAHALSLLRGLSQLRAERKFLDVTLEAAGGRDFPAHRAVLAAASPYFRAMFAGQLRESRAERVRLHGVPPDMLQLLLDFSYTGRVAVSGDNAEPLLRAADLLQFPAVKEACGAFLQQQLDLANCLDMQDFAEAFSCSGLASAAQRFILRHVGELGAEQLERLPLARLLRYLRDDGLCVPKEEAAYQLALRWVRADPPRRAPHWPQLLEAVRLPFVRRFYLLAHVEAEPLVARCPPCLRLLREARDFQAARYDRHDRGPCPRMRPRPSTGLAEILVLVGGCDQDCDELVTVDCYNPQTGQWRYLAEFPDHLGGGYSIVALGNDIYVTGGSDGSRLYDCVWRYNSSVNEWTEVAPMLKAREYHSSSVLDGLLYVVAADSTERYDHATDSWEALQPMTYPMDNCSTTACRGRLYAIGSLAGKETMVIQCYDPDTDLWSLVNCGQLPPWSFAPKTVTLNGLMYFVRDDSAEVDVYNPTKDEWDKIPSMNQVHVGGSLAVLGGKLYVSGGYDNTFELSDVVEAYDPETRAWSVVGRLPEPTFWHGSVSIFRQFMPQTPAGGRGFELNSGSNDVDAGYHRLPQNPEELH</sequence>
<accession>Q3U410</accession>
<accession>B1AS70</accession>
<accession>Q3TZ30</accession>